<dbReference type="EMBL" id="AC026238">
    <property type="protein sequence ID" value="AAF98409.1"/>
    <property type="molecule type" value="Genomic_DNA"/>
</dbReference>
<dbReference type="EMBL" id="CP002684">
    <property type="protein sequence ID" value="AEE29739.1"/>
    <property type="molecule type" value="Genomic_DNA"/>
</dbReference>
<dbReference type="EMBL" id="BT006195">
    <property type="protein sequence ID" value="AAP12844.1"/>
    <property type="molecule type" value="mRNA"/>
</dbReference>
<dbReference type="EMBL" id="AK228238">
    <property type="protein sequence ID" value="BAF00186.1"/>
    <property type="molecule type" value="mRNA"/>
</dbReference>
<dbReference type="EMBL" id="AY087143">
    <property type="protein sequence ID" value="AAM64701.1"/>
    <property type="molecule type" value="mRNA"/>
</dbReference>
<dbReference type="PIR" id="C86320">
    <property type="entry name" value="C86320"/>
</dbReference>
<dbReference type="RefSeq" id="NP_564059.1">
    <property type="nucleotide sequence ID" value="NM_101723.4"/>
</dbReference>
<dbReference type="SMR" id="Q9FZ86"/>
<dbReference type="STRING" id="3702.Q9FZ86"/>
<dbReference type="CAZy" id="CBM43">
    <property type="family name" value="Carbohydrate-Binding Module Family 43"/>
</dbReference>
<dbReference type="TCDB" id="1.I.2.1.1">
    <property type="family name" value="the plant plasmodesmata (ppd) family"/>
</dbReference>
<dbReference type="GlyGen" id="Q9FZ86">
    <property type="glycosylation" value="1 site"/>
</dbReference>
<dbReference type="PaxDb" id="3702-AT1G18650.1"/>
<dbReference type="ProteomicsDB" id="236375"/>
<dbReference type="EnsemblPlants" id="AT1G18650.1">
    <property type="protein sequence ID" value="AT1G18650.1"/>
    <property type="gene ID" value="AT1G18650"/>
</dbReference>
<dbReference type="GeneID" id="838446"/>
<dbReference type="Gramene" id="AT1G18650.1">
    <property type="protein sequence ID" value="AT1G18650.1"/>
    <property type="gene ID" value="AT1G18650"/>
</dbReference>
<dbReference type="KEGG" id="ath:AT1G18650"/>
<dbReference type="Araport" id="AT1G18650"/>
<dbReference type="TAIR" id="AT1G18650">
    <property type="gene designation" value="PDCB3"/>
</dbReference>
<dbReference type="eggNOG" id="ENOG502RYRZ">
    <property type="taxonomic scope" value="Eukaryota"/>
</dbReference>
<dbReference type="HOGENOM" id="CLU_031666_1_0_1"/>
<dbReference type="InParanoid" id="Q9FZ86"/>
<dbReference type="OrthoDB" id="1930814at2759"/>
<dbReference type="PhylomeDB" id="Q9FZ86"/>
<dbReference type="PRO" id="PR:Q9FZ86"/>
<dbReference type="Proteomes" id="UP000006548">
    <property type="component" value="Chromosome 1"/>
</dbReference>
<dbReference type="ExpressionAtlas" id="Q9FZ86">
    <property type="expression patterns" value="baseline and differential"/>
</dbReference>
<dbReference type="GO" id="GO:0005886">
    <property type="term" value="C:plasma membrane"/>
    <property type="evidence" value="ECO:0007669"/>
    <property type="project" value="UniProtKB-SubCell"/>
</dbReference>
<dbReference type="GO" id="GO:0009506">
    <property type="term" value="C:plasmodesma"/>
    <property type="evidence" value="ECO:0000314"/>
    <property type="project" value="TAIR"/>
</dbReference>
<dbReference type="GO" id="GO:0098552">
    <property type="term" value="C:side of membrane"/>
    <property type="evidence" value="ECO:0007669"/>
    <property type="project" value="UniProtKB-KW"/>
</dbReference>
<dbReference type="GO" id="GO:0001872">
    <property type="term" value="F:(1-&gt;3)-beta-D-glucan binding"/>
    <property type="evidence" value="ECO:0000250"/>
    <property type="project" value="TAIR"/>
</dbReference>
<dbReference type="GO" id="GO:0030247">
    <property type="term" value="F:polysaccharide binding"/>
    <property type="evidence" value="ECO:0000250"/>
    <property type="project" value="TAIR"/>
</dbReference>
<dbReference type="FunFam" id="1.20.58.1040:FF:000001">
    <property type="entry name" value="Glucan endo-1,3-beta-glucosidase 4"/>
    <property type="match status" value="1"/>
</dbReference>
<dbReference type="Gene3D" id="1.20.58.1040">
    <property type="match status" value="1"/>
</dbReference>
<dbReference type="InterPro" id="IPR012946">
    <property type="entry name" value="X8"/>
</dbReference>
<dbReference type="InterPro" id="IPR044788">
    <property type="entry name" value="X8_dom_prot"/>
</dbReference>
<dbReference type="PANTHER" id="PTHR31044">
    <property type="entry name" value="BETA-1,3 GLUCANASE"/>
    <property type="match status" value="1"/>
</dbReference>
<dbReference type="PANTHER" id="PTHR31044:SF25">
    <property type="entry name" value="PLASMODESMATA CALLOSE-BINDING PROTEIN 3"/>
    <property type="match status" value="1"/>
</dbReference>
<dbReference type="Pfam" id="PF07983">
    <property type="entry name" value="X8"/>
    <property type="match status" value="1"/>
</dbReference>
<dbReference type="SMART" id="SM00768">
    <property type="entry name" value="X8"/>
    <property type="match status" value="1"/>
</dbReference>
<comment type="subcellular location">
    <subcellularLocation>
        <location evidence="4">Cell membrane</location>
        <topology evidence="4">Lipid-anchor</topology>
        <topology evidence="4">GPI-anchor</topology>
    </subcellularLocation>
    <subcellularLocation>
        <location evidence="4">Cell junction</location>
        <location evidence="4">Plasmodesma</location>
    </subcellularLocation>
</comment>
<comment type="tissue specificity">
    <text evidence="4">Expressed in the shoot apical region and in young leaves but also detected in the laminar and vasculature of mature leaves.</text>
</comment>
<comment type="PTM">
    <text evidence="1">Contains two additional disulfide bonds.</text>
</comment>
<organism>
    <name type="scientific">Arabidopsis thaliana</name>
    <name type="common">Mouse-ear cress</name>
    <dbReference type="NCBI Taxonomy" id="3702"/>
    <lineage>
        <taxon>Eukaryota</taxon>
        <taxon>Viridiplantae</taxon>
        <taxon>Streptophyta</taxon>
        <taxon>Embryophyta</taxon>
        <taxon>Tracheophyta</taxon>
        <taxon>Spermatophyta</taxon>
        <taxon>Magnoliopsida</taxon>
        <taxon>eudicotyledons</taxon>
        <taxon>Gunneridae</taxon>
        <taxon>Pentapetalae</taxon>
        <taxon>rosids</taxon>
        <taxon>malvids</taxon>
        <taxon>Brassicales</taxon>
        <taxon>Brassicaceae</taxon>
        <taxon>Camelineae</taxon>
        <taxon>Arabidopsis</taxon>
    </lineage>
</organism>
<accession>Q9FZ86</accession>
<keyword id="KW-0965">Cell junction</keyword>
<keyword id="KW-1003">Cell membrane</keyword>
<keyword id="KW-1015">Disulfide bond</keyword>
<keyword id="KW-0325">Glycoprotein</keyword>
<keyword id="KW-0336">GPI-anchor</keyword>
<keyword id="KW-0449">Lipoprotein</keyword>
<keyword id="KW-0472">Membrane</keyword>
<keyword id="KW-1185">Reference proteome</keyword>
<keyword id="KW-0732">Signal</keyword>
<reference key="1">
    <citation type="journal article" date="2000" name="Nature">
        <title>Sequence and analysis of chromosome 1 of the plant Arabidopsis thaliana.</title>
        <authorList>
            <person name="Theologis A."/>
            <person name="Ecker J.R."/>
            <person name="Palm C.J."/>
            <person name="Federspiel N.A."/>
            <person name="Kaul S."/>
            <person name="White O."/>
            <person name="Alonso J."/>
            <person name="Altafi H."/>
            <person name="Araujo R."/>
            <person name="Bowman C.L."/>
            <person name="Brooks S.Y."/>
            <person name="Buehler E."/>
            <person name="Chan A."/>
            <person name="Chao Q."/>
            <person name="Chen H."/>
            <person name="Cheuk R.F."/>
            <person name="Chin C.W."/>
            <person name="Chung M.K."/>
            <person name="Conn L."/>
            <person name="Conway A.B."/>
            <person name="Conway A.R."/>
            <person name="Creasy T.H."/>
            <person name="Dewar K."/>
            <person name="Dunn P."/>
            <person name="Etgu P."/>
            <person name="Feldblyum T.V."/>
            <person name="Feng J.-D."/>
            <person name="Fong B."/>
            <person name="Fujii C.Y."/>
            <person name="Gill J.E."/>
            <person name="Goldsmith A.D."/>
            <person name="Haas B."/>
            <person name="Hansen N.F."/>
            <person name="Hughes B."/>
            <person name="Huizar L."/>
            <person name="Hunter J.L."/>
            <person name="Jenkins J."/>
            <person name="Johnson-Hopson C."/>
            <person name="Khan S."/>
            <person name="Khaykin E."/>
            <person name="Kim C.J."/>
            <person name="Koo H.L."/>
            <person name="Kremenetskaia I."/>
            <person name="Kurtz D.B."/>
            <person name="Kwan A."/>
            <person name="Lam B."/>
            <person name="Langin-Hooper S."/>
            <person name="Lee A."/>
            <person name="Lee J.M."/>
            <person name="Lenz C.A."/>
            <person name="Li J.H."/>
            <person name="Li Y.-P."/>
            <person name="Lin X."/>
            <person name="Liu S.X."/>
            <person name="Liu Z.A."/>
            <person name="Luros J.S."/>
            <person name="Maiti R."/>
            <person name="Marziali A."/>
            <person name="Militscher J."/>
            <person name="Miranda M."/>
            <person name="Nguyen M."/>
            <person name="Nierman W.C."/>
            <person name="Osborne B.I."/>
            <person name="Pai G."/>
            <person name="Peterson J."/>
            <person name="Pham P.K."/>
            <person name="Rizzo M."/>
            <person name="Rooney T."/>
            <person name="Rowley D."/>
            <person name="Sakano H."/>
            <person name="Salzberg S.L."/>
            <person name="Schwartz J.R."/>
            <person name="Shinn P."/>
            <person name="Southwick A.M."/>
            <person name="Sun H."/>
            <person name="Tallon L.J."/>
            <person name="Tambunga G."/>
            <person name="Toriumi M.J."/>
            <person name="Town C.D."/>
            <person name="Utterback T."/>
            <person name="Van Aken S."/>
            <person name="Vaysberg M."/>
            <person name="Vysotskaia V.S."/>
            <person name="Walker M."/>
            <person name="Wu D."/>
            <person name="Yu G."/>
            <person name="Fraser C.M."/>
            <person name="Venter J.C."/>
            <person name="Davis R.W."/>
        </authorList>
    </citation>
    <scope>NUCLEOTIDE SEQUENCE [LARGE SCALE GENOMIC DNA]</scope>
    <source>
        <strain>cv. Columbia</strain>
    </source>
</reference>
<reference key="2">
    <citation type="journal article" date="2017" name="Plant J.">
        <title>Araport11: a complete reannotation of the Arabidopsis thaliana reference genome.</title>
        <authorList>
            <person name="Cheng C.Y."/>
            <person name="Krishnakumar V."/>
            <person name="Chan A.P."/>
            <person name="Thibaud-Nissen F."/>
            <person name="Schobel S."/>
            <person name="Town C.D."/>
        </authorList>
    </citation>
    <scope>GENOME REANNOTATION</scope>
    <source>
        <strain>cv. Columbia</strain>
    </source>
</reference>
<reference key="3">
    <citation type="journal article" date="2003" name="Science">
        <title>Empirical analysis of transcriptional activity in the Arabidopsis genome.</title>
        <authorList>
            <person name="Yamada K."/>
            <person name="Lim J."/>
            <person name="Dale J.M."/>
            <person name="Chen H."/>
            <person name="Shinn P."/>
            <person name="Palm C.J."/>
            <person name="Southwick A.M."/>
            <person name="Wu H.C."/>
            <person name="Kim C.J."/>
            <person name="Nguyen M."/>
            <person name="Pham P.K."/>
            <person name="Cheuk R.F."/>
            <person name="Karlin-Newmann G."/>
            <person name="Liu S.X."/>
            <person name="Lam B."/>
            <person name="Sakano H."/>
            <person name="Wu T."/>
            <person name="Yu G."/>
            <person name="Miranda M."/>
            <person name="Quach H.L."/>
            <person name="Tripp M."/>
            <person name="Chang C.H."/>
            <person name="Lee J.M."/>
            <person name="Toriumi M.J."/>
            <person name="Chan M.M."/>
            <person name="Tang C.C."/>
            <person name="Onodera C.S."/>
            <person name="Deng J.M."/>
            <person name="Akiyama K."/>
            <person name="Ansari Y."/>
            <person name="Arakawa T."/>
            <person name="Banh J."/>
            <person name="Banno F."/>
            <person name="Bowser L."/>
            <person name="Brooks S.Y."/>
            <person name="Carninci P."/>
            <person name="Chao Q."/>
            <person name="Choy N."/>
            <person name="Enju A."/>
            <person name="Goldsmith A.D."/>
            <person name="Gurjal M."/>
            <person name="Hansen N.F."/>
            <person name="Hayashizaki Y."/>
            <person name="Johnson-Hopson C."/>
            <person name="Hsuan V.W."/>
            <person name="Iida K."/>
            <person name="Karnes M."/>
            <person name="Khan S."/>
            <person name="Koesema E."/>
            <person name="Ishida J."/>
            <person name="Jiang P.X."/>
            <person name="Jones T."/>
            <person name="Kawai J."/>
            <person name="Kamiya A."/>
            <person name="Meyers C."/>
            <person name="Nakajima M."/>
            <person name="Narusaka M."/>
            <person name="Seki M."/>
            <person name="Sakurai T."/>
            <person name="Satou M."/>
            <person name="Tamse R."/>
            <person name="Vaysberg M."/>
            <person name="Wallender E.K."/>
            <person name="Wong C."/>
            <person name="Yamamura Y."/>
            <person name="Yuan S."/>
            <person name="Shinozaki K."/>
            <person name="Davis R.W."/>
            <person name="Theologis A."/>
            <person name="Ecker J.R."/>
        </authorList>
    </citation>
    <scope>NUCLEOTIDE SEQUENCE [LARGE SCALE MRNA]</scope>
    <source>
        <strain>cv. Columbia</strain>
    </source>
</reference>
<reference key="4">
    <citation type="submission" date="2006-07" db="EMBL/GenBank/DDBJ databases">
        <title>Large-scale analysis of RIKEN Arabidopsis full-length (RAFL) cDNAs.</title>
        <authorList>
            <person name="Totoki Y."/>
            <person name="Seki M."/>
            <person name="Ishida J."/>
            <person name="Nakajima M."/>
            <person name="Enju A."/>
            <person name="Kamiya A."/>
            <person name="Narusaka M."/>
            <person name="Shin-i T."/>
            <person name="Nakagawa M."/>
            <person name="Sakamoto N."/>
            <person name="Oishi K."/>
            <person name="Kohara Y."/>
            <person name="Kobayashi M."/>
            <person name="Toyoda A."/>
            <person name="Sakaki Y."/>
            <person name="Sakurai T."/>
            <person name="Iida K."/>
            <person name="Akiyama K."/>
            <person name="Satou M."/>
            <person name="Toyoda T."/>
            <person name="Konagaya A."/>
            <person name="Carninci P."/>
            <person name="Kawai J."/>
            <person name="Hayashizaki Y."/>
            <person name="Shinozaki K."/>
        </authorList>
    </citation>
    <scope>NUCLEOTIDE SEQUENCE [LARGE SCALE MRNA]</scope>
    <source>
        <strain>cv. Columbia</strain>
    </source>
</reference>
<reference key="5">
    <citation type="submission" date="2002-03" db="EMBL/GenBank/DDBJ databases">
        <title>Full-length cDNA from Arabidopsis thaliana.</title>
        <authorList>
            <person name="Brover V.V."/>
            <person name="Troukhan M.E."/>
            <person name="Alexandrov N.A."/>
            <person name="Lu Y.-P."/>
            <person name="Flavell R.B."/>
            <person name="Feldmann K.A."/>
        </authorList>
    </citation>
    <scope>NUCLEOTIDE SEQUENCE [LARGE SCALE MRNA]</scope>
</reference>
<reference key="6">
    <citation type="journal article" date="2009" name="Plant Cell">
        <title>An Arabidopsis GPI-anchor plasmodesmal neck protein with callose binding activity and potential to regulate cell-to-cell trafficking.</title>
        <authorList>
            <person name="Simpson C."/>
            <person name="Thomas C."/>
            <person name="Findlay K."/>
            <person name="Bayer E."/>
            <person name="Maule A.J."/>
        </authorList>
    </citation>
    <scope>GENE FAMILY</scope>
    <scope>NOMENCLATURE</scope>
    <scope>SUBCELLULAR LOCATION</scope>
    <scope>TISSUE SPECIFICITY</scope>
    <scope>GPI-ANCHOR</scope>
</reference>
<proteinExistence type="evidence at protein level"/>
<sequence length="184" mass="19336">MAVFVLVMILLAMAGHSSGTWCVCKEGLSEAMLQKTLDYACGAGADCGPIHQTGPCFNPNTVKSHCSYAVNSFFQKKGQSLGTCDFAGTATFSASDPSYTTCPFPASASGSGTTTPVTTTPSTRVPTTTNTRPYTITPSTGGGLGIPSGINPDYTDPSFGFKLQSPRFGFIVLFTLFLPFYLFS</sequence>
<feature type="signal peptide" evidence="2">
    <location>
        <begin position="1"/>
        <end position="19"/>
    </location>
</feature>
<feature type="chain" id="PRO_0000430194" description="PLASMODESMATA CALLOSE-BINDING PROTEIN 3">
    <location>
        <begin position="20"/>
        <end position="158"/>
    </location>
</feature>
<feature type="propeptide" id="PRO_0000430195" description="Removed in mature form" evidence="2">
    <location>
        <begin position="159"/>
        <end position="184"/>
    </location>
</feature>
<feature type="region of interest" description="Disordered" evidence="3">
    <location>
        <begin position="109"/>
        <end position="146"/>
    </location>
</feature>
<feature type="compositionally biased region" description="Low complexity" evidence="3">
    <location>
        <begin position="113"/>
        <end position="139"/>
    </location>
</feature>
<feature type="lipid moiety-binding region" description="GPI-anchor amidated serine" evidence="2">
    <location>
        <position position="158"/>
    </location>
</feature>
<feature type="disulfide bond" evidence="1">
    <location>
        <begin position="22"/>
        <end position="84"/>
    </location>
</feature>
<protein>
    <recommendedName>
        <fullName>PLASMODESMATA CALLOSE-BINDING PROTEIN 3</fullName>
        <shortName>AtPDCB3</shortName>
    </recommendedName>
</protein>
<gene>
    <name type="primary">PDCB3</name>
    <name type="ordered locus">At1g18650</name>
    <name type="ORF">F25I16.1</name>
</gene>
<evidence type="ECO:0000250" key="1"/>
<evidence type="ECO:0000255" key="2"/>
<evidence type="ECO:0000256" key="3">
    <source>
        <dbReference type="SAM" id="MobiDB-lite"/>
    </source>
</evidence>
<evidence type="ECO:0000269" key="4">
    <source>
    </source>
</evidence>
<name>PDCB3_ARATH</name>